<comment type="function">
    <text evidence="1">Non-catalytic component of the TSC-TBC complex, a multiprotein complex that acts as a negative regulator of the canonical mTORC1 complex, an evolutionarily conserved central nutrient sensor that stimulates anabolic reactions and macromolecule biosynthesis to promote cellular biomass generation and growth. The TSC-TBC complex acts as a GTPase-activating protein (GAP) for the small GTPase RHEB, a direct activator of the protein kinase activity of mTORC1. In absence of nutrients, the TSC-TBC complex inhibits mTORC1, thereby preventing phosphorylation of ribosomal protein S6 kinase (RPS6KB1 and RPS6KB2) and EIF4EBP1 (4E-BP1) by the mTORC1 signaling. The TSC-TBC complex is inactivated in response to nutrients, relieving inhibition of mTORC1.</text>
</comment>
<comment type="subunit">
    <text evidence="1">Component of the TSC-TBC complex (also named Rhebulator complex), composed of 2 molecules of TSC1, 2 molecules of TSC2 and 1 molecule of TBC1D7. Interacts with TSC1 (via C-terminal half of the coiled-coil domain).</text>
</comment>
<comment type="subcellular location">
    <subcellularLocation>
        <location evidence="1">Lysosome membrane</location>
    </subcellularLocation>
    <subcellularLocation>
        <location evidence="1">Cytoplasmic vesicle</location>
    </subcellularLocation>
    <subcellularLocation>
        <location evidence="1">Cytoplasm</location>
        <location evidence="1">Cytosol</location>
    </subcellularLocation>
    <text evidence="1">Localizes in the cytoplasmic vesicles of the endomembrane in association with the TSC-TBC complex. Recruited to lysosomal membranes in a RHEB-dependent process in absence of nutrients. In response to nutrients, the complex dissociates from lysosomal membranes and relocalizes to the cytosol.</text>
</comment>
<protein>
    <recommendedName>
        <fullName>TBC1 domain family member 7</fullName>
    </recommendedName>
</protein>
<reference key="1">
    <citation type="journal article" date="2005" name="BMC Genomics">
        <title>Characterization of 954 bovine full-CDS cDNA sequences.</title>
        <authorList>
            <person name="Harhay G.P."/>
            <person name="Sonstegard T.S."/>
            <person name="Keele J.W."/>
            <person name="Heaton M.P."/>
            <person name="Clawson M.L."/>
            <person name="Snelling W.M."/>
            <person name="Wiedmann R.T."/>
            <person name="Van Tassell C.P."/>
            <person name="Smith T.P.L."/>
        </authorList>
    </citation>
    <scope>NUCLEOTIDE SEQUENCE [LARGE SCALE MRNA]</scope>
</reference>
<reference key="2">
    <citation type="journal article" date="2009" name="Genome Biol.">
        <title>A whole-genome assembly of the domestic cow, Bos taurus.</title>
        <authorList>
            <person name="Zimin A.V."/>
            <person name="Delcher A.L."/>
            <person name="Florea L."/>
            <person name="Kelley D.R."/>
            <person name="Schatz M.C."/>
            <person name="Puiu D."/>
            <person name="Hanrahan F."/>
            <person name="Pertea G."/>
            <person name="Van Tassell C.P."/>
            <person name="Sonstegard T.S."/>
            <person name="Marcais G."/>
            <person name="Roberts M."/>
            <person name="Subramanian P."/>
            <person name="Yorke J.A."/>
            <person name="Salzberg S.L."/>
        </authorList>
    </citation>
    <scope>NUCLEOTIDE SEQUENCE [LARGE SCALE GENOMIC DNA]</scope>
    <source>
        <strain>Hereford</strain>
    </source>
</reference>
<reference key="3">
    <citation type="submission" date="2006-06" db="EMBL/GenBank/DDBJ databases">
        <authorList>
            <consortium name="NIH - Mammalian Gene Collection (MGC) project"/>
        </authorList>
    </citation>
    <scope>NUCLEOTIDE SEQUENCE [LARGE SCALE MRNA]</scope>
    <source>
        <strain>Hereford</strain>
        <tissue>Thalamus</tissue>
    </source>
</reference>
<gene>
    <name type="primary">TBC1D7</name>
</gene>
<proteinExistence type="evidence at transcript level"/>
<feature type="chain" id="PRO_0000208030" description="TBC1 domain family member 7">
    <location>
        <begin position="1"/>
        <end position="293"/>
    </location>
</feature>
<feature type="domain" description="Rab-GAP TBC" evidence="2">
    <location>
        <begin position="50"/>
        <end position="231"/>
    </location>
</feature>
<feature type="sequence conflict" description="In Ref. 1; AAX09013 and 3; AAI18161." evidence="3" ref="1 3">
    <original>Y</original>
    <variation>C</variation>
    <location>
        <position position="108"/>
    </location>
</feature>
<feature type="sequence conflict" description="In Ref. 1; AAX09013 and 3; AAI18161." evidence="3" ref="1 3">
    <original>M</original>
    <variation>T</variation>
    <location>
        <position position="155"/>
    </location>
</feature>
<evidence type="ECO:0000250" key="1">
    <source>
        <dbReference type="UniProtKB" id="Q9P0N9"/>
    </source>
</evidence>
<evidence type="ECO:0000255" key="2">
    <source>
        <dbReference type="PROSITE-ProRule" id="PRU00163"/>
    </source>
</evidence>
<evidence type="ECO:0000305" key="3"/>
<dbReference type="EMBL" id="BT020996">
    <property type="protein sequence ID" value="AAX09013.1"/>
    <property type="molecule type" value="mRNA"/>
</dbReference>
<dbReference type="EMBL" id="DAAA02055699">
    <property type="status" value="NOT_ANNOTATED_CDS"/>
    <property type="molecule type" value="Genomic_DNA"/>
</dbReference>
<dbReference type="EMBL" id="DAAA02055700">
    <property type="status" value="NOT_ANNOTATED_CDS"/>
    <property type="molecule type" value="Genomic_DNA"/>
</dbReference>
<dbReference type="EMBL" id="BC118160">
    <property type="protein sequence ID" value="AAI18161.1"/>
    <property type="molecule type" value="mRNA"/>
</dbReference>
<dbReference type="RefSeq" id="NP_001015643.1">
    <property type="nucleotide sequence ID" value="NM_001015643.2"/>
</dbReference>
<dbReference type="RefSeq" id="XP_024839407.1">
    <property type="nucleotide sequence ID" value="XM_024983639.2"/>
</dbReference>
<dbReference type="RefSeq" id="XP_024839408.1">
    <property type="nucleotide sequence ID" value="XM_024983640.2"/>
</dbReference>
<dbReference type="SMR" id="Q5E9C4"/>
<dbReference type="FunCoup" id="Q5E9C4">
    <property type="interactions" value="2075"/>
</dbReference>
<dbReference type="STRING" id="9913.ENSBTAP00000022819"/>
<dbReference type="PaxDb" id="9913-ENSBTAP00000022819"/>
<dbReference type="Ensembl" id="ENSBTAT00000022819.7">
    <property type="protein sequence ID" value="ENSBTAP00000022819.5"/>
    <property type="gene ID" value="ENSBTAG00000017160.7"/>
</dbReference>
<dbReference type="GeneID" id="532704"/>
<dbReference type="KEGG" id="bta:532704"/>
<dbReference type="CTD" id="51256"/>
<dbReference type="VEuPathDB" id="HostDB:ENSBTAG00000017160"/>
<dbReference type="VGNC" id="VGNC:50071">
    <property type="gene designation" value="TBC1D7"/>
</dbReference>
<dbReference type="eggNOG" id="ENOG502QPZD">
    <property type="taxonomic scope" value="Eukaryota"/>
</dbReference>
<dbReference type="GeneTree" id="ENSGT00390000009122"/>
<dbReference type="HOGENOM" id="CLU_082520_0_0_1"/>
<dbReference type="InParanoid" id="Q5E9C4"/>
<dbReference type="OMA" id="VMHTMWL"/>
<dbReference type="OrthoDB" id="18718at2759"/>
<dbReference type="TreeFam" id="TF323655"/>
<dbReference type="Reactome" id="R-BTA-8854214">
    <property type="pathway name" value="TBC/RABGAPs"/>
</dbReference>
<dbReference type="Proteomes" id="UP000009136">
    <property type="component" value="Chromosome 23"/>
</dbReference>
<dbReference type="Bgee" id="ENSBTAG00000017160">
    <property type="expression patterns" value="Expressed in oocyte and 105 other cell types or tissues"/>
</dbReference>
<dbReference type="GO" id="GO:0031410">
    <property type="term" value="C:cytoplasmic vesicle"/>
    <property type="evidence" value="ECO:0000250"/>
    <property type="project" value="UniProtKB"/>
</dbReference>
<dbReference type="GO" id="GO:0005829">
    <property type="term" value="C:cytosol"/>
    <property type="evidence" value="ECO:0000250"/>
    <property type="project" value="UniProtKB"/>
</dbReference>
<dbReference type="GO" id="GO:0005765">
    <property type="term" value="C:lysosomal membrane"/>
    <property type="evidence" value="ECO:0007669"/>
    <property type="project" value="UniProtKB-SubCell"/>
</dbReference>
<dbReference type="GO" id="GO:0033596">
    <property type="term" value="C:TSC1-TSC2 complex"/>
    <property type="evidence" value="ECO:0000250"/>
    <property type="project" value="UniProtKB"/>
</dbReference>
<dbReference type="GO" id="GO:0005096">
    <property type="term" value="F:GTPase activator activity"/>
    <property type="evidence" value="ECO:0000318"/>
    <property type="project" value="GO_Central"/>
</dbReference>
<dbReference type="GO" id="GO:0062078">
    <property type="term" value="F:TSC1-TSC2 complex binding"/>
    <property type="evidence" value="ECO:0000318"/>
    <property type="project" value="GO_Central"/>
</dbReference>
<dbReference type="GO" id="GO:0090630">
    <property type="term" value="P:activation of GTPase activity"/>
    <property type="evidence" value="ECO:0000250"/>
    <property type="project" value="UniProtKB"/>
</dbReference>
<dbReference type="GO" id="GO:0009267">
    <property type="term" value="P:cellular response to starvation"/>
    <property type="evidence" value="ECO:0000250"/>
    <property type="project" value="UniProtKB"/>
</dbReference>
<dbReference type="GO" id="GO:0032007">
    <property type="term" value="P:negative regulation of TOR signaling"/>
    <property type="evidence" value="ECO:0000250"/>
    <property type="project" value="UniProtKB"/>
</dbReference>
<dbReference type="GO" id="GO:1904262">
    <property type="term" value="P:negative regulation of TORC1 signaling"/>
    <property type="evidence" value="ECO:0000250"/>
    <property type="project" value="UniProtKB"/>
</dbReference>
<dbReference type="GO" id="GO:0031398">
    <property type="term" value="P:positive regulation of protein ubiquitination"/>
    <property type="evidence" value="ECO:0000250"/>
    <property type="project" value="UniProtKB"/>
</dbReference>
<dbReference type="GO" id="GO:0070848">
    <property type="term" value="P:response to growth factor"/>
    <property type="evidence" value="ECO:0000250"/>
    <property type="project" value="UniProtKB"/>
</dbReference>
<dbReference type="FunFam" id="1.10.10.750:FF:000006">
    <property type="entry name" value="TBC1 domain family member 7"/>
    <property type="match status" value="1"/>
</dbReference>
<dbReference type="FunFam" id="1.10.472.80:FF:000028">
    <property type="entry name" value="TBC1 domain family member 7"/>
    <property type="match status" value="1"/>
</dbReference>
<dbReference type="FunFam" id="1.10.8.680:FF:000001">
    <property type="entry name" value="TBC1 domain family, member 7"/>
    <property type="match status" value="1"/>
</dbReference>
<dbReference type="Gene3D" id="1.10.10.750">
    <property type="entry name" value="Ypt/Rab-GAP domain of gyp1p, domain 1"/>
    <property type="match status" value="1"/>
</dbReference>
<dbReference type="Gene3D" id="1.10.8.680">
    <property type="entry name" value="Ypt/Rab-GAP domain of gyp1p, domain 2"/>
    <property type="match status" value="1"/>
</dbReference>
<dbReference type="Gene3D" id="1.10.472.80">
    <property type="entry name" value="Ypt/Rab-GAP domain of gyp1p, domain 3"/>
    <property type="match status" value="1"/>
</dbReference>
<dbReference type="InterPro" id="IPR000195">
    <property type="entry name" value="Rab-GAP-TBC_dom"/>
</dbReference>
<dbReference type="InterPro" id="IPR035969">
    <property type="entry name" value="Rab-GAP_TBC_sf"/>
</dbReference>
<dbReference type="InterPro" id="IPR039842">
    <property type="entry name" value="TBC1D7"/>
</dbReference>
<dbReference type="InterPro" id="IPR043039">
    <property type="entry name" value="TBC1D7_dom2"/>
</dbReference>
<dbReference type="PANTHER" id="PTHR13530">
    <property type="entry name" value="TBC1 DOMAIN FAMILY MEMBER 7"/>
    <property type="match status" value="1"/>
</dbReference>
<dbReference type="PANTHER" id="PTHR13530:SF3">
    <property type="entry name" value="TBC1 DOMAIN FAMILY MEMBER 7"/>
    <property type="match status" value="1"/>
</dbReference>
<dbReference type="Pfam" id="PF00566">
    <property type="entry name" value="RabGAP-TBC"/>
    <property type="match status" value="1"/>
</dbReference>
<dbReference type="SUPFAM" id="SSF47923">
    <property type="entry name" value="Ypt/Rab-GAP domain of gyp1p"/>
    <property type="match status" value="2"/>
</dbReference>
<dbReference type="PROSITE" id="PS50086">
    <property type="entry name" value="TBC_RABGAP"/>
    <property type="match status" value="1"/>
</dbReference>
<keyword id="KW-0963">Cytoplasm</keyword>
<keyword id="KW-0968">Cytoplasmic vesicle</keyword>
<keyword id="KW-0343">GTPase activation</keyword>
<keyword id="KW-0458">Lysosome</keyword>
<keyword id="KW-0472">Membrane</keyword>
<keyword id="KW-1185">Reference proteome</keyword>
<sequence length="293" mass="33904">MTEDSQRNFRSVYYEKVGFRGVEEKKSLEILLKDDRLDIEKLCTFSQRFPLPSMYRALVWKVLLGILPPHHESHVQVMTYRKEQYSDVLHALKVIRFVSDATPQSEVYLYMHRLESGKLPRSPSFPLEPEDEVFLAIAKAMEEMVEDSVDCYWIMRCFVNQLNSKYRDTLPQLPKAFEQYLNLEDSRLLSHLKACCAVSTLPYELWFKKCFAGCLPESSLQRIWDKVVSGSCKILVFVAVEILLTFKIKVMALNSAEKITKFLENIPQDSSDAIVSKAIDLWHKHCGTPVHSA</sequence>
<name>TBCD7_BOVIN</name>
<accession>Q5E9C4</accession>
<accession>F1MHE9</accession>
<accession>Q17QV4</accession>
<organism>
    <name type="scientific">Bos taurus</name>
    <name type="common">Bovine</name>
    <dbReference type="NCBI Taxonomy" id="9913"/>
    <lineage>
        <taxon>Eukaryota</taxon>
        <taxon>Metazoa</taxon>
        <taxon>Chordata</taxon>
        <taxon>Craniata</taxon>
        <taxon>Vertebrata</taxon>
        <taxon>Euteleostomi</taxon>
        <taxon>Mammalia</taxon>
        <taxon>Eutheria</taxon>
        <taxon>Laurasiatheria</taxon>
        <taxon>Artiodactyla</taxon>
        <taxon>Ruminantia</taxon>
        <taxon>Pecora</taxon>
        <taxon>Bovidae</taxon>
        <taxon>Bovinae</taxon>
        <taxon>Bos</taxon>
    </lineage>
</organism>